<proteinExistence type="inferred from homology"/>
<protein>
    <recommendedName>
        <fullName evidence="1">Ribonuclease VapC6</fullName>
        <shortName evidence="1">RNase VapC6</shortName>
        <ecNumber evidence="1">3.1.-.-</ecNumber>
    </recommendedName>
    <alternativeName>
        <fullName evidence="1">Toxin VapC6</fullName>
    </alternativeName>
</protein>
<organism>
    <name type="scientific">Mycobacterium tuberculosis (strain CDC 1551 / Oshkosh)</name>
    <dbReference type="NCBI Taxonomy" id="83331"/>
    <lineage>
        <taxon>Bacteria</taxon>
        <taxon>Bacillati</taxon>
        <taxon>Actinomycetota</taxon>
        <taxon>Actinomycetes</taxon>
        <taxon>Mycobacteriales</taxon>
        <taxon>Mycobacteriaceae</taxon>
        <taxon>Mycobacterium</taxon>
        <taxon>Mycobacterium tuberculosis complex</taxon>
    </lineage>
</organism>
<evidence type="ECO:0000255" key="1">
    <source>
        <dbReference type="HAMAP-Rule" id="MF_00265"/>
    </source>
</evidence>
<reference key="1">
    <citation type="journal article" date="2002" name="J. Bacteriol.">
        <title>Whole-genome comparison of Mycobacterium tuberculosis clinical and laboratory strains.</title>
        <authorList>
            <person name="Fleischmann R.D."/>
            <person name="Alland D."/>
            <person name="Eisen J.A."/>
            <person name="Carpenter L."/>
            <person name="White O."/>
            <person name="Peterson J.D."/>
            <person name="DeBoy R.T."/>
            <person name="Dodson R.J."/>
            <person name="Gwinn M.L."/>
            <person name="Haft D.H."/>
            <person name="Hickey E.K."/>
            <person name="Kolonay J.F."/>
            <person name="Nelson W.C."/>
            <person name="Umayam L.A."/>
            <person name="Ermolaeva M.D."/>
            <person name="Salzberg S.L."/>
            <person name="Delcher A."/>
            <person name="Utterback T.R."/>
            <person name="Weidman J.F."/>
            <person name="Khouri H.M."/>
            <person name="Gill J."/>
            <person name="Mikula A."/>
            <person name="Bishai W."/>
            <person name="Jacobs W.R. Jr."/>
            <person name="Venter J.C."/>
            <person name="Fraser C.M."/>
        </authorList>
    </citation>
    <scope>NUCLEOTIDE SEQUENCE [LARGE SCALE GENOMIC DNA]</scope>
    <source>
        <strain>CDC 1551 / Oshkosh</strain>
    </source>
</reference>
<name>VAPC6_MYCTO</name>
<keyword id="KW-0378">Hydrolase</keyword>
<keyword id="KW-0460">Magnesium</keyword>
<keyword id="KW-0479">Metal-binding</keyword>
<keyword id="KW-0540">Nuclease</keyword>
<keyword id="KW-1185">Reference proteome</keyword>
<keyword id="KW-1277">Toxin-antitoxin system</keyword>
<dbReference type="EC" id="3.1.-.-" evidence="1"/>
<dbReference type="EMBL" id="AE000516">
    <property type="protein sequence ID" value="AAK44910.1"/>
    <property type="molecule type" value="Genomic_DNA"/>
</dbReference>
<dbReference type="PIR" id="C70534">
    <property type="entry name" value="C70534"/>
</dbReference>
<dbReference type="RefSeq" id="WP_003403365.1">
    <property type="nucleotide sequence ID" value="NZ_KK341227.1"/>
</dbReference>
<dbReference type="SMR" id="P9WFB4"/>
<dbReference type="KEGG" id="mtc:MT0685"/>
<dbReference type="PATRIC" id="fig|83331.31.peg.728"/>
<dbReference type="HOGENOM" id="CLU_118482_4_0_11"/>
<dbReference type="Proteomes" id="UP000001020">
    <property type="component" value="Chromosome"/>
</dbReference>
<dbReference type="GO" id="GO:0000287">
    <property type="term" value="F:magnesium ion binding"/>
    <property type="evidence" value="ECO:0007669"/>
    <property type="project" value="UniProtKB-UniRule"/>
</dbReference>
<dbReference type="GO" id="GO:0004540">
    <property type="term" value="F:RNA nuclease activity"/>
    <property type="evidence" value="ECO:0007669"/>
    <property type="project" value="InterPro"/>
</dbReference>
<dbReference type="Gene3D" id="3.40.50.1010">
    <property type="entry name" value="5'-nuclease"/>
    <property type="match status" value="1"/>
</dbReference>
<dbReference type="HAMAP" id="MF_00265">
    <property type="entry name" value="VapC_Nob1"/>
    <property type="match status" value="1"/>
</dbReference>
<dbReference type="InterPro" id="IPR050556">
    <property type="entry name" value="Type_II_TA_system_RNase"/>
</dbReference>
<dbReference type="InterPro" id="IPR022907">
    <property type="entry name" value="VapC_family"/>
</dbReference>
<dbReference type="PANTHER" id="PTHR33653">
    <property type="entry name" value="RIBONUCLEASE VAPC2"/>
    <property type="match status" value="1"/>
</dbReference>
<dbReference type="PANTHER" id="PTHR33653:SF1">
    <property type="entry name" value="RIBONUCLEASE VAPC2"/>
    <property type="match status" value="1"/>
</dbReference>
<accession>P9WFB4</accession>
<accession>L0T639</accession>
<accession>O06783</accession>
<accession>Q7D9H2</accession>
<comment type="function">
    <text evidence="1">Toxic component of a type II toxin-antitoxin (TA) system. An RNase. The cognate antitoxin is VapB6 (By similarity).</text>
</comment>
<comment type="cofactor">
    <cofactor evidence="1">
        <name>Mg(2+)</name>
        <dbReference type="ChEBI" id="CHEBI:18420"/>
    </cofactor>
</comment>
<comment type="similarity">
    <text evidence="1">Belongs to the PINc/VapC protein family.</text>
</comment>
<feature type="chain" id="PRO_0000428568" description="Ribonuclease VapC6">
    <location>
        <begin position="1"/>
        <end position="127"/>
    </location>
</feature>
<feature type="domain" description="PINc" evidence="1">
    <location>
        <begin position="26"/>
        <end position="120"/>
    </location>
</feature>
<feature type="binding site" evidence="1">
    <location>
        <position position="86"/>
    </location>
    <ligand>
        <name>Mg(2+)</name>
        <dbReference type="ChEBI" id="CHEBI:18420"/>
    </ligand>
</feature>
<sequence>MAAATTTGTHRGLELRAAQRAVGSCEPQRAEFCRSARNADEFDQMSRMFGDVYPDVPVPKSVWRWIDSAQHRLARAGAVGALSVVDLLICDTAAARGLVVLHDDADYELAERHLPDIRVRRVVSADD</sequence>
<gene>
    <name evidence="1" type="primary">vapC6</name>
    <name type="ordered locus">MT0685</name>
</gene>